<comment type="function">
    <text evidence="1">Catalyzes the formation of 6,7-dimethyl-8-ribityllumazine by condensation of 5-amino-6-(D-ribitylamino)uracil with 3,4-dihydroxy-2-butanone 4-phosphate. This is the penultimate step in the biosynthesis of riboflavin.</text>
</comment>
<comment type="catalytic activity">
    <reaction evidence="1">
        <text>(2S)-2-hydroxy-3-oxobutyl phosphate + 5-amino-6-(D-ribitylamino)uracil = 6,7-dimethyl-8-(1-D-ribityl)lumazine + phosphate + 2 H2O + H(+)</text>
        <dbReference type="Rhea" id="RHEA:26152"/>
        <dbReference type="ChEBI" id="CHEBI:15377"/>
        <dbReference type="ChEBI" id="CHEBI:15378"/>
        <dbReference type="ChEBI" id="CHEBI:15934"/>
        <dbReference type="ChEBI" id="CHEBI:43474"/>
        <dbReference type="ChEBI" id="CHEBI:58201"/>
        <dbReference type="ChEBI" id="CHEBI:58830"/>
        <dbReference type="EC" id="2.5.1.78"/>
    </reaction>
</comment>
<comment type="pathway">
    <text evidence="1">Cofactor biosynthesis; riboflavin biosynthesis; riboflavin from 2-hydroxy-3-oxobutyl phosphate and 5-amino-6-(D-ribitylamino)uracil: step 1/2.</text>
</comment>
<comment type="similarity">
    <text evidence="1">Belongs to the DMRL synthase family.</text>
</comment>
<proteinExistence type="inferred from homology"/>
<organism>
    <name type="scientific">Frankia casuarinae (strain DSM 45818 / CECT 9043 / HFP020203 / CcI3)</name>
    <dbReference type="NCBI Taxonomy" id="106370"/>
    <lineage>
        <taxon>Bacteria</taxon>
        <taxon>Bacillati</taxon>
        <taxon>Actinomycetota</taxon>
        <taxon>Actinomycetes</taxon>
        <taxon>Frankiales</taxon>
        <taxon>Frankiaceae</taxon>
        <taxon>Frankia</taxon>
    </lineage>
</organism>
<feature type="chain" id="PRO_1000040422" description="6,7-dimethyl-8-ribityllumazine synthase">
    <location>
        <begin position="1"/>
        <end position="160"/>
    </location>
</feature>
<feature type="active site" description="Proton donor" evidence="1">
    <location>
        <position position="89"/>
    </location>
</feature>
<feature type="binding site" evidence="1">
    <location>
        <position position="26"/>
    </location>
    <ligand>
        <name>5-amino-6-(D-ribitylamino)uracil</name>
        <dbReference type="ChEBI" id="CHEBI:15934"/>
    </ligand>
</feature>
<feature type="binding site" evidence="1">
    <location>
        <begin position="59"/>
        <end position="61"/>
    </location>
    <ligand>
        <name>5-amino-6-(D-ribitylamino)uracil</name>
        <dbReference type="ChEBI" id="CHEBI:15934"/>
    </ligand>
</feature>
<feature type="binding site" evidence="1">
    <location>
        <begin position="81"/>
        <end position="83"/>
    </location>
    <ligand>
        <name>5-amino-6-(D-ribitylamino)uracil</name>
        <dbReference type="ChEBI" id="CHEBI:15934"/>
    </ligand>
</feature>
<feature type="binding site" evidence="1">
    <location>
        <begin position="86"/>
        <end position="87"/>
    </location>
    <ligand>
        <name>(2S)-2-hydroxy-3-oxobutyl phosphate</name>
        <dbReference type="ChEBI" id="CHEBI:58830"/>
    </ligand>
</feature>
<feature type="binding site" evidence="1">
    <location>
        <position position="114"/>
    </location>
    <ligand>
        <name>5-amino-6-(D-ribitylamino)uracil</name>
        <dbReference type="ChEBI" id="CHEBI:15934"/>
    </ligand>
</feature>
<feature type="binding site" evidence="1">
    <location>
        <position position="128"/>
    </location>
    <ligand>
        <name>(2S)-2-hydroxy-3-oxobutyl phosphate</name>
        <dbReference type="ChEBI" id="CHEBI:58830"/>
    </ligand>
</feature>
<keyword id="KW-1185">Reference proteome</keyword>
<keyword id="KW-0686">Riboflavin biosynthesis</keyword>
<keyword id="KW-0808">Transferase</keyword>
<accession>Q2J850</accession>
<gene>
    <name evidence="1" type="primary">ribH</name>
    <name type="ordered locus">Francci3_3185</name>
</gene>
<dbReference type="EC" id="2.5.1.78" evidence="1"/>
<dbReference type="EMBL" id="CP000249">
    <property type="protein sequence ID" value="ABD12542.1"/>
    <property type="molecule type" value="Genomic_DNA"/>
</dbReference>
<dbReference type="RefSeq" id="WP_011437570.1">
    <property type="nucleotide sequence ID" value="NZ_LRTJ01000064.1"/>
</dbReference>
<dbReference type="SMR" id="Q2J850"/>
<dbReference type="STRING" id="106370.Francci3_3185"/>
<dbReference type="KEGG" id="fra:Francci3_3185"/>
<dbReference type="eggNOG" id="COG0054">
    <property type="taxonomic scope" value="Bacteria"/>
</dbReference>
<dbReference type="HOGENOM" id="CLU_089358_1_2_11"/>
<dbReference type="OrthoDB" id="9809709at2"/>
<dbReference type="PhylomeDB" id="Q2J850"/>
<dbReference type="UniPathway" id="UPA00275">
    <property type="reaction ID" value="UER00404"/>
</dbReference>
<dbReference type="Proteomes" id="UP000001937">
    <property type="component" value="Chromosome"/>
</dbReference>
<dbReference type="GO" id="GO:0005829">
    <property type="term" value="C:cytosol"/>
    <property type="evidence" value="ECO:0007669"/>
    <property type="project" value="TreeGrafter"/>
</dbReference>
<dbReference type="GO" id="GO:0009349">
    <property type="term" value="C:riboflavin synthase complex"/>
    <property type="evidence" value="ECO:0007669"/>
    <property type="project" value="InterPro"/>
</dbReference>
<dbReference type="GO" id="GO:0000906">
    <property type="term" value="F:6,7-dimethyl-8-ribityllumazine synthase activity"/>
    <property type="evidence" value="ECO:0007669"/>
    <property type="project" value="UniProtKB-UniRule"/>
</dbReference>
<dbReference type="GO" id="GO:0009231">
    <property type="term" value="P:riboflavin biosynthetic process"/>
    <property type="evidence" value="ECO:0007669"/>
    <property type="project" value="UniProtKB-UniRule"/>
</dbReference>
<dbReference type="CDD" id="cd09209">
    <property type="entry name" value="Lumazine_synthase-I"/>
    <property type="match status" value="1"/>
</dbReference>
<dbReference type="Gene3D" id="3.40.50.960">
    <property type="entry name" value="Lumazine/riboflavin synthase"/>
    <property type="match status" value="1"/>
</dbReference>
<dbReference type="HAMAP" id="MF_00178">
    <property type="entry name" value="Lumazine_synth"/>
    <property type="match status" value="1"/>
</dbReference>
<dbReference type="InterPro" id="IPR034964">
    <property type="entry name" value="LS"/>
</dbReference>
<dbReference type="InterPro" id="IPR002180">
    <property type="entry name" value="LS/RS"/>
</dbReference>
<dbReference type="InterPro" id="IPR036467">
    <property type="entry name" value="LS/RS_sf"/>
</dbReference>
<dbReference type="NCBIfam" id="TIGR00114">
    <property type="entry name" value="lumazine-synth"/>
    <property type="match status" value="1"/>
</dbReference>
<dbReference type="PANTHER" id="PTHR21058:SF0">
    <property type="entry name" value="6,7-DIMETHYL-8-RIBITYLLUMAZINE SYNTHASE"/>
    <property type="match status" value="1"/>
</dbReference>
<dbReference type="PANTHER" id="PTHR21058">
    <property type="entry name" value="6,7-DIMETHYL-8-RIBITYLLUMAZINE SYNTHASE DMRL SYNTHASE LUMAZINE SYNTHASE"/>
    <property type="match status" value="1"/>
</dbReference>
<dbReference type="Pfam" id="PF00885">
    <property type="entry name" value="DMRL_synthase"/>
    <property type="match status" value="1"/>
</dbReference>
<dbReference type="SUPFAM" id="SSF52121">
    <property type="entry name" value="Lumazine synthase"/>
    <property type="match status" value="1"/>
</dbReference>
<reference key="1">
    <citation type="journal article" date="2007" name="Genome Res.">
        <title>Genome characteristics of facultatively symbiotic Frankia sp. strains reflect host range and host plant biogeography.</title>
        <authorList>
            <person name="Normand P."/>
            <person name="Lapierre P."/>
            <person name="Tisa L.S."/>
            <person name="Gogarten J.P."/>
            <person name="Alloisio N."/>
            <person name="Bagnarol E."/>
            <person name="Bassi C.A."/>
            <person name="Berry A.M."/>
            <person name="Bickhart D.M."/>
            <person name="Choisne N."/>
            <person name="Couloux A."/>
            <person name="Cournoyer B."/>
            <person name="Cruveiller S."/>
            <person name="Daubin V."/>
            <person name="Demange N."/>
            <person name="Francino M.P."/>
            <person name="Goltsman E."/>
            <person name="Huang Y."/>
            <person name="Kopp O.R."/>
            <person name="Labarre L."/>
            <person name="Lapidus A."/>
            <person name="Lavire C."/>
            <person name="Marechal J."/>
            <person name="Martinez M."/>
            <person name="Mastronunzio J.E."/>
            <person name="Mullin B.C."/>
            <person name="Niemann J."/>
            <person name="Pujic P."/>
            <person name="Rawnsley T."/>
            <person name="Rouy Z."/>
            <person name="Schenowitz C."/>
            <person name="Sellstedt A."/>
            <person name="Tavares F."/>
            <person name="Tomkins J.P."/>
            <person name="Vallenet D."/>
            <person name="Valverde C."/>
            <person name="Wall L.G."/>
            <person name="Wang Y."/>
            <person name="Medigue C."/>
            <person name="Benson D.R."/>
        </authorList>
    </citation>
    <scope>NUCLEOTIDE SEQUENCE [LARGE SCALE GENOMIC DNA]</scope>
    <source>
        <strain>DSM 45818 / CECT 9043 / HFP020203 / CcI3</strain>
    </source>
</reference>
<evidence type="ECO:0000255" key="1">
    <source>
        <dbReference type="HAMAP-Rule" id="MF_00178"/>
    </source>
</evidence>
<sequence>MSGLGAPAEVLPPVAGMRLAVVATRWHAEITDALLAGALRAAKDAGLAAAPAVVRVSGAVELPVIAAALAARHDAVVALGVVIRGGTPHFDYVCQFVTAGLARVTLDARVPVGFGVLTCDTVEQARDRAGLPGSSEDKGREATLAALDTAAVLRDLELAG</sequence>
<name>RISB_FRACC</name>
<protein>
    <recommendedName>
        <fullName evidence="1">6,7-dimethyl-8-ribityllumazine synthase</fullName>
        <shortName evidence="1">DMRL synthase</shortName>
        <shortName evidence="1">LS</shortName>
        <shortName evidence="1">Lumazine synthase</shortName>
        <ecNumber evidence="1">2.5.1.78</ecNumber>
    </recommendedName>
</protein>